<dbReference type="EMBL" id="X54225">
    <property type="protein sequence ID" value="CAA38133.1"/>
    <property type="status" value="ALT_INIT"/>
    <property type="molecule type" value="Genomic_DNA"/>
</dbReference>
<dbReference type="EMBL" id="AE005672">
    <property type="protein sequence ID" value="AAK76032.1"/>
    <property type="molecule type" value="Genomic_DNA"/>
</dbReference>
<dbReference type="PIR" id="B98094">
    <property type="entry name" value="B98094"/>
</dbReference>
<dbReference type="PIR" id="G95229">
    <property type="entry name" value="G95229"/>
</dbReference>
<dbReference type="PIR" id="S10640">
    <property type="entry name" value="S10640"/>
</dbReference>
<dbReference type="PaxDb" id="170187-SP_1965"/>
<dbReference type="EnsemblBacteria" id="AAK76032">
    <property type="protein sequence ID" value="AAK76032"/>
    <property type="gene ID" value="SP_1965"/>
</dbReference>
<dbReference type="KEGG" id="spn:SP_1965"/>
<dbReference type="eggNOG" id="ENOG503047K">
    <property type="taxonomic scope" value="Bacteria"/>
</dbReference>
<dbReference type="Proteomes" id="UP000000585">
    <property type="component" value="Chromosome"/>
</dbReference>
<dbReference type="InterPro" id="IPR024596">
    <property type="entry name" value="RNApol_su_b/EpuA"/>
</dbReference>
<dbReference type="Pfam" id="PF11772">
    <property type="entry name" value="EpuA"/>
    <property type="match status" value="1"/>
</dbReference>
<protein>
    <recommendedName>
        <fullName>Protein EpuA</fullName>
    </recommendedName>
</protein>
<name>EPUA_STRPN</name>
<feature type="chain" id="PRO_0000087001" description="Protein EpuA">
    <location>
        <begin position="1"/>
        <end position="68"/>
    </location>
</feature>
<feature type="sequence conflict" description="In Ref. 1." evidence="1" ref="1">
    <original>V</original>
    <variation>M</variation>
    <location>
        <position position="4"/>
    </location>
</feature>
<evidence type="ECO:0000305" key="1"/>
<keyword id="KW-1185">Reference proteome</keyword>
<reference key="1">
    <citation type="journal article" date="1990" name="J. Mol. Biol.">
        <title>Genetic and structural characterization of endA. A membrane-bound nuclease required for transformation of Streptococcus pneumoniae.</title>
        <authorList>
            <person name="Puyet A."/>
            <person name="Greenberg B."/>
            <person name="Lacks S.A."/>
        </authorList>
    </citation>
    <scope>NUCLEOTIDE SEQUENCE [GENOMIC DNA]</scope>
    <source>
        <strain>470</strain>
    </source>
</reference>
<reference key="2">
    <citation type="journal article" date="2001" name="Science">
        <title>Complete genome sequence of a virulent isolate of Streptococcus pneumoniae.</title>
        <authorList>
            <person name="Tettelin H."/>
            <person name="Nelson K.E."/>
            <person name="Paulsen I.T."/>
            <person name="Eisen J.A."/>
            <person name="Read T.D."/>
            <person name="Peterson S.N."/>
            <person name="Heidelberg J.F."/>
            <person name="DeBoy R.T."/>
            <person name="Haft D.H."/>
            <person name="Dodson R.J."/>
            <person name="Durkin A.S."/>
            <person name="Gwinn M.L."/>
            <person name="Kolonay J.F."/>
            <person name="Nelson W.C."/>
            <person name="Peterson J.D."/>
            <person name="Umayam L.A."/>
            <person name="White O."/>
            <person name="Salzberg S.L."/>
            <person name="Lewis M.R."/>
            <person name="Radune D."/>
            <person name="Holtzapple E.K."/>
            <person name="Khouri H.M."/>
            <person name="Wolf A.M."/>
            <person name="Utterback T.R."/>
            <person name="Hansen C.L."/>
            <person name="McDonald L.A."/>
            <person name="Feldblyum T.V."/>
            <person name="Angiuoli S.V."/>
            <person name="Dickinson T."/>
            <person name="Hickey E.K."/>
            <person name="Holt I.E."/>
            <person name="Loftus B.J."/>
            <person name="Yang F."/>
            <person name="Smith H.O."/>
            <person name="Venter J.C."/>
            <person name="Dougherty B.A."/>
            <person name="Morrison D.A."/>
            <person name="Hollingshead S.K."/>
            <person name="Fraser C.M."/>
        </authorList>
    </citation>
    <scope>NUCLEOTIDE SEQUENCE [LARGE SCALE GENOMIC DNA]</scope>
    <source>
        <strain>ATCC BAA-334 / TIGR4</strain>
    </source>
</reference>
<comment type="sequence caution" evidence="1">
    <conflict type="erroneous initiation">
        <sequence resource="EMBL-CDS" id="CAA38133"/>
    </conflict>
</comment>
<accession>Q03159</accession>
<organism>
    <name type="scientific">Streptococcus pneumoniae serotype 4 (strain ATCC BAA-334 / TIGR4)</name>
    <dbReference type="NCBI Taxonomy" id="170187"/>
    <lineage>
        <taxon>Bacteria</taxon>
        <taxon>Bacillati</taxon>
        <taxon>Bacillota</taxon>
        <taxon>Bacilli</taxon>
        <taxon>Lactobacillales</taxon>
        <taxon>Streptococcaceae</taxon>
        <taxon>Streptococcus</taxon>
    </lineage>
</organism>
<proteinExistence type="predicted"/>
<gene>
    <name type="primary">epuA</name>
    <name type="ordered locus">SP_1965</name>
</gene>
<sequence>MRQVMKMNKKSSYVVKRLLLVIIVLILGTLALGIGLMVGYGILGKGQDPWAILSPAKWQELIHKFTGN</sequence>